<gene>
    <name evidence="1" type="primary">ilvD</name>
    <name type="ordered locus">ABAYE0023</name>
</gene>
<comment type="function">
    <text evidence="1">Functions in the biosynthesis of branched-chain amino acids. Catalyzes the dehydration of (2R,3R)-2,3-dihydroxy-3-methylpentanoate (2,3-dihydroxy-3-methylvalerate) into 2-oxo-3-methylpentanoate (2-oxo-3-methylvalerate) and of (2R)-2,3-dihydroxy-3-methylbutanoate (2,3-dihydroxyisovalerate) into 2-oxo-3-methylbutanoate (2-oxoisovalerate), the penultimate precursor to L-isoleucine and L-valine, respectively.</text>
</comment>
<comment type="catalytic activity">
    <reaction evidence="1">
        <text>(2R)-2,3-dihydroxy-3-methylbutanoate = 3-methyl-2-oxobutanoate + H2O</text>
        <dbReference type="Rhea" id="RHEA:24809"/>
        <dbReference type="ChEBI" id="CHEBI:11851"/>
        <dbReference type="ChEBI" id="CHEBI:15377"/>
        <dbReference type="ChEBI" id="CHEBI:49072"/>
        <dbReference type="EC" id="4.2.1.9"/>
    </reaction>
    <physiologicalReaction direction="left-to-right" evidence="1">
        <dbReference type="Rhea" id="RHEA:24810"/>
    </physiologicalReaction>
</comment>
<comment type="catalytic activity">
    <reaction evidence="1">
        <text>(2R,3R)-2,3-dihydroxy-3-methylpentanoate = (S)-3-methyl-2-oxopentanoate + H2O</text>
        <dbReference type="Rhea" id="RHEA:27694"/>
        <dbReference type="ChEBI" id="CHEBI:15377"/>
        <dbReference type="ChEBI" id="CHEBI:35146"/>
        <dbReference type="ChEBI" id="CHEBI:49258"/>
        <dbReference type="EC" id="4.2.1.9"/>
    </reaction>
    <physiologicalReaction direction="left-to-right" evidence="1">
        <dbReference type="Rhea" id="RHEA:27695"/>
    </physiologicalReaction>
</comment>
<comment type="cofactor">
    <cofactor evidence="1">
        <name>[2Fe-2S] cluster</name>
        <dbReference type="ChEBI" id="CHEBI:190135"/>
    </cofactor>
    <text evidence="1">Binds 1 [2Fe-2S] cluster per subunit. This cluster acts as a Lewis acid cofactor.</text>
</comment>
<comment type="cofactor">
    <cofactor evidence="1">
        <name>Mg(2+)</name>
        <dbReference type="ChEBI" id="CHEBI:18420"/>
    </cofactor>
</comment>
<comment type="pathway">
    <text evidence="1">Amino-acid biosynthesis; L-isoleucine biosynthesis; L-isoleucine from 2-oxobutanoate: step 3/4.</text>
</comment>
<comment type="pathway">
    <text evidence="1">Amino-acid biosynthesis; L-valine biosynthesis; L-valine from pyruvate: step 3/4.</text>
</comment>
<comment type="subunit">
    <text evidence="1">Homodimer.</text>
</comment>
<comment type="similarity">
    <text evidence="1">Belongs to the IlvD/Edd family.</text>
</comment>
<organism>
    <name type="scientific">Acinetobacter baumannii (strain AYE)</name>
    <dbReference type="NCBI Taxonomy" id="509173"/>
    <lineage>
        <taxon>Bacteria</taxon>
        <taxon>Pseudomonadati</taxon>
        <taxon>Pseudomonadota</taxon>
        <taxon>Gammaproteobacteria</taxon>
        <taxon>Moraxellales</taxon>
        <taxon>Moraxellaceae</taxon>
        <taxon>Acinetobacter</taxon>
        <taxon>Acinetobacter calcoaceticus/baumannii complex</taxon>
    </lineage>
</organism>
<proteinExistence type="inferred from homology"/>
<sequence length="609" mass="65327">MPDYRSKTSTHGRNMAGARGLWRATGMKDEDFGKPIIAVVNSFTQFVPGHVHLKDLGQLVAAEIQAAGGVAKEFNTIAVDDGIAMGHDGMLYSLPSRDLIADSVEYMVNAHCADAMVCISNCDKITPGMLMAAMRLNIPVVFVSGGPMEAGKVKFRGDEKAIDLVDAMVVAADDSYTDEEVAEFERSACPTCGSCSGMFTANSMNCLTEALGLSLPGNGSIVATHANRKKLFLKAGQLIVELAKRYYEQNDASILPRSIATKAAFKNAMTLDIAMGGSTNTVLHLLAAANEAEVDFTMDDIDELSRRVPVLSKVAPAKQDVHMEDVHRAGGIMAILGELDRANLLDVSVPTVHEKTLKDALDKWDIIRTEDPDVYEFYRSSPGGVPTQVAFSQNRYYSTLDGDREKGVIRNAEHAFSKDGGLAVLYGNIALDGCIVKTAGVDESILKFTGSARVFESQDAAVEAILGNEIKAGDVVIIRYEGPRGGPGMQEMLYPTSYLKSKGLGKDCALVTDGRFSGGSSGLSIGHVSPEAAEGGAIGLVEDGDTIEIDIPNRTIHLNIDDATLAHRRTVQEAKGWHPKEERKRKVSKALKVYAMHTTSAAKGAVRVL</sequence>
<feature type="chain" id="PRO_1000089362" description="Dihydroxy-acid dehydratase">
    <location>
        <begin position="1"/>
        <end position="609"/>
    </location>
</feature>
<feature type="active site" description="Proton acceptor" evidence="1">
    <location>
        <position position="517"/>
    </location>
</feature>
<feature type="binding site" evidence="1">
    <location>
        <position position="81"/>
    </location>
    <ligand>
        <name>Mg(2+)</name>
        <dbReference type="ChEBI" id="CHEBI:18420"/>
    </ligand>
</feature>
<feature type="binding site" evidence="1">
    <location>
        <position position="122"/>
    </location>
    <ligand>
        <name>[2Fe-2S] cluster</name>
        <dbReference type="ChEBI" id="CHEBI:190135"/>
    </ligand>
</feature>
<feature type="binding site" evidence="1">
    <location>
        <position position="123"/>
    </location>
    <ligand>
        <name>Mg(2+)</name>
        <dbReference type="ChEBI" id="CHEBI:18420"/>
    </ligand>
</feature>
<feature type="binding site" description="via carbamate group" evidence="1">
    <location>
        <position position="124"/>
    </location>
    <ligand>
        <name>Mg(2+)</name>
        <dbReference type="ChEBI" id="CHEBI:18420"/>
    </ligand>
</feature>
<feature type="binding site" evidence="1">
    <location>
        <position position="195"/>
    </location>
    <ligand>
        <name>[2Fe-2S] cluster</name>
        <dbReference type="ChEBI" id="CHEBI:190135"/>
    </ligand>
</feature>
<feature type="binding site" evidence="1">
    <location>
        <position position="491"/>
    </location>
    <ligand>
        <name>Mg(2+)</name>
        <dbReference type="ChEBI" id="CHEBI:18420"/>
    </ligand>
</feature>
<feature type="modified residue" description="N6-carboxylysine" evidence="1">
    <location>
        <position position="124"/>
    </location>
</feature>
<accession>B0VAE1</accession>
<protein>
    <recommendedName>
        <fullName evidence="1">Dihydroxy-acid dehydratase</fullName>
        <shortName evidence="1">DAD</shortName>
        <ecNumber evidence="1">4.2.1.9</ecNumber>
    </recommendedName>
</protein>
<name>ILVD_ACIBY</name>
<evidence type="ECO:0000255" key="1">
    <source>
        <dbReference type="HAMAP-Rule" id="MF_00012"/>
    </source>
</evidence>
<keyword id="KW-0001">2Fe-2S</keyword>
<keyword id="KW-0028">Amino-acid biosynthesis</keyword>
<keyword id="KW-0100">Branched-chain amino acid biosynthesis</keyword>
<keyword id="KW-0408">Iron</keyword>
<keyword id="KW-0411">Iron-sulfur</keyword>
<keyword id="KW-0456">Lyase</keyword>
<keyword id="KW-0460">Magnesium</keyword>
<keyword id="KW-0479">Metal-binding</keyword>
<reference key="1">
    <citation type="journal article" date="2008" name="PLoS ONE">
        <title>Comparative analysis of Acinetobacters: three genomes for three lifestyles.</title>
        <authorList>
            <person name="Vallenet D."/>
            <person name="Nordmann P."/>
            <person name="Barbe V."/>
            <person name="Poirel L."/>
            <person name="Mangenot S."/>
            <person name="Bataille E."/>
            <person name="Dossat C."/>
            <person name="Gas S."/>
            <person name="Kreimeyer A."/>
            <person name="Lenoble P."/>
            <person name="Oztas S."/>
            <person name="Poulain J."/>
            <person name="Segurens B."/>
            <person name="Robert C."/>
            <person name="Abergel C."/>
            <person name="Claverie J.-M."/>
            <person name="Raoult D."/>
            <person name="Medigue C."/>
            <person name="Weissenbach J."/>
            <person name="Cruveiller S."/>
        </authorList>
    </citation>
    <scope>NUCLEOTIDE SEQUENCE [LARGE SCALE GENOMIC DNA]</scope>
    <source>
        <strain>AYE</strain>
    </source>
</reference>
<dbReference type="EC" id="4.2.1.9" evidence="1"/>
<dbReference type="EMBL" id="CU459141">
    <property type="protein sequence ID" value="CAM85013.1"/>
    <property type="molecule type" value="Genomic_DNA"/>
</dbReference>
<dbReference type="RefSeq" id="WP_001113590.1">
    <property type="nucleotide sequence ID" value="NZ_JBDGFB010000004.1"/>
</dbReference>
<dbReference type="SMR" id="B0VAE1"/>
<dbReference type="EnsemblBacteria" id="CAM85013">
    <property type="protein sequence ID" value="CAM85013"/>
    <property type="gene ID" value="ABAYE0023"/>
</dbReference>
<dbReference type="KEGG" id="aby:ABAYE0023"/>
<dbReference type="HOGENOM" id="CLU_014271_4_2_6"/>
<dbReference type="UniPathway" id="UPA00047">
    <property type="reaction ID" value="UER00057"/>
</dbReference>
<dbReference type="UniPathway" id="UPA00049">
    <property type="reaction ID" value="UER00061"/>
</dbReference>
<dbReference type="GO" id="GO:0005829">
    <property type="term" value="C:cytosol"/>
    <property type="evidence" value="ECO:0007669"/>
    <property type="project" value="TreeGrafter"/>
</dbReference>
<dbReference type="GO" id="GO:0051537">
    <property type="term" value="F:2 iron, 2 sulfur cluster binding"/>
    <property type="evidence" value="ECO:0007669"/>
    <property type="project" value="UniProtKB-UniRule"/>
</dbReference>
<dbReference type="GO" id="GO:0004160">
    <property type="term" value="F:dihydroxy-acid dehydratase activity"/>
    <property type="evidence" value="ECO:0007669"/>
    <property type="project" value="UniProtKB-UniRule"/>
</dbReference>
<dbReference type="GO" id="GO:0000287">
    <property type="term" value="F:magnesium ion binding"/>
    <property type="evidence" value="ECO:0007669"/>
    <property type="project" value="UniProtKB-UniRule"/>
</dbReference>
<dbReference type="GO" id="GO:0009097">
    <property type="term" value="P:isoleucine biosynthetic process"/>
    <property type="evidence" value="ECO:0007669"/>
    <property type="project" value="UniProtKB-UniRule"/>
</dbReference>
<dbReference type="GO" id="GO:0009099">
    <property type="term" value="P:L-valine biosynthetic process"/>
    <property type="evidence" value="ECO:0007669"/>
    <property type="project" value="UniProtKB-UniRule"/>
</dbReference>
<dbReference type="FunFam" id="3.50.30.80:FF:000001">
    <property type="entry name" value="Dihydroxy-acid dehydratase"/>
    <property type="match status" value="1"/>
</dbReference>
<dbReference type="Gene3D" id="3.50.30.80">
    <property type="entry name" value="IlvD/EDD C-terminal domain-like"/>
    <property type="match status" value="1"/>
</dbReference>
<dbReference type="HAMAP" id="MF_00012">
    <property type="entry name" value="IlvD"/>
    <property type="match status" value="1"/>
</dbReference>
<dbReference type="InterPro" id="IPR042096">
    <property type="entry name" value="Dihydro-acid_dehy_C"/>
</dbReference>
<dbReference type="InterPro" id="IPR004404">
    <property type="entry name" value="DihydroxyA_deHydtase"/>
</dbReference>
<dbReference type="InterPro" id="IPR020558">
    <property type="entry name" value="DiOHA_6PGluconate_deHydtase_CS"/>
</dbReference>
<dbReference type="InterPro" id="IPR056740">
    <property type="entry name" value="ILV_EDD_C"/>
</dbReference>
<dbReference type="InterPro" id="IPR000581">
    <property type="entry name" value="ILV_EDD_N"/>
</dbReference>
<dbReference type="InterPro" id="IPR037237">
    <property type="entry name" value="IlvD/EDD_N"/>
</dbReference>
<dbReference type="NCBIfam" id="TIGR00110">
    <property type="entry name" value="ilvD"/>
    <property type="match status" value="1"/>
</dbReference>
<dbReference type="NCBIfam" id="NF009103">
    <property type="entry name" value="PRK12448.1"/>
    <property type="match status" value="1"/>
</dbReference>
<dbReference type="PANTHER" id="PTHR43661">
    <property type="entry name" value="D-XYLONATE DEHYDRATASE"/>
    <property type="match status" value="1"/>
</dbReference>
<dbReference type="PANTHER" id="PTHR43661:SF3">
    <property type="entry name" value="D-XYLONATE DEHYDRATASE YAGF-RELATED"/>
    <property type="match status" value="1"/>
</dbReference>
<dbReference type="Pfam" id="PF24877">
    <property type="entry name" value="ILV_EDD_C"/>
    <property type="match status" value="1"/>
</dbReference>
<dbReference type="Pfam" id="PF00920">
    <property type="entry name" value="ILVD_EDD_N"/>
    <property type="match status" value="1"/>
</dbReference>
<dbReference type="SUPFAM" id="SSF143975">
    <property type="entry name" value="IlvD/EDD N-terminal domain-like"/>
    <property type="match status" value="1"/>
</dbReference>
<dbReference type="SUPFAM" id="SSF52016">
    <property type="entry name" value="LeuD/IlvD-like"/>
    <property type="match status" value="1"/>
</dbReference>
<dbReference type="PROSITE" id="PS00886">
    <property type="entry name" value="ILVD_EDD_1"/>
    <property type="match status" value="1"/>
</dbReference>
<dbReference type="PROSITE" id="PS00887">
    <property type="entry name" value="ILVD_EDD_2"/>
    <property type="match status" value="1"/>
</dbReference>